<sequence length="311" mass="35239">MAVDIQPACLGLYCGKTLLFKNGSTEIYGECGVCPRGQRTNAQKYCQPCTESPELYDWLYLGFMAMLPLVLHWFFIEWYSGKKSSSALFQHITALFECSMAAIITLLVSDPVGVLYIRSCRVLMLSDWYTMLYNPSPDYVTTVHCTHEAVYPLYTIVFIYYAFCLVLMMLLRPLLVKKIACGLGKSDRFKSIYAALYFFPILTVLQAVGGGLLYYAFPYIILVLSLVTLAVYMSASEIENCYDLLVRKKRLIVLFSHWLLHAYGIISISRVDKLEQDLPLLALVPTPALFYLFTAKFTEPSRILSEGANGH</sequence>
<accession>Q9P055</accession>
<accession>B4DP67</accession>
<accession>Q6FIB6</accession>
<accession>Q6IAJ2</accession>
<accession>Q7Z5D4</accession>
<accession>Q86SY6</accession>
<accession>Q9H0Q6</accession>
<accession>Q9H2W0</accession>
<accession>Q9HAH5</accession>
<accession>Q9P0R3</accession>
<dbReference type="EMBL" id="AF529304">
    <property type="protein sequence ID" value="AAP85636.1"/>
    <property type="molecule type" value="mRNA"/>
</dbReference>
<dbReference type="EMBL" id="AF151047">
    <property type="protein sequence ID" value="AAF36133.1"/>
    <property type="status" value="ALT_FRAME"/>
    <property type="molecule type" value="mRNA"/>
</dbReference>
<dbReference type="EMBL" id="AF161445">
    <property type="protein sequence ID" value="AAF29005.1"/>
    <property type="status" value="ALT_SEQ"/>
    <property type="molecule type" value="mRNA"/>
</dbReference>
<dbReference type="EMBL" id="AL136696">
    <property type="protein sequence ID" value="CAB66631.1"/>
    <property type="molecule type" value="mRNA"/>
</dbReference>
<dbReference type="EMBL" id="AK021683">
    <property type="protein sequence ID" value="BAB13874.1"/>
    <property type="molecule type" value="mRNA"/>
</dbReference>
<dbReference type="EMBL" id="AK027591">
    <property type="protein sequence ID" value="BAB55216.1"/>
    <property type="molecule type" value="mRNA"/>
</dbReference>
<dbReference type="EMBL" id="AK298209">
    <property type="protein sequence ID" value="BAG60479.1"/>
    <property type="molecule type" value="mRNA"/>
</dbReference>
<dbReference type="EMBL" id="AF212245">
    <property type="protein sequence ID" value="AAG41781.1"/>
    <property type="molecule type" value="mRNA"/>
</dbReference>
<dbReference type="EMBL" id="BX161501">
    <property type="protein sequence ID" value="CAD61945.1"/>
    <property type="molecule type" value="mRNA"/>
</dbReference>
<dbReference type="EMBL" id="CR457163">
    <property type="protein sequence ID" value="CAG33444.1"/>
    <property type="molecule type" value="mRNA"/>
</dbReference>
<dbReference type="EMBL" id="CR533510">
    <property type="protein sequence ID" value="CAG38541.1"/>
    <property type="molecule type" value="mRNA"/>
</dbReference>
<dbReference type="EMBL" id="CH471061">
    <property type="protein sequence ID" value="EAW80753.1"/>
    <property type="molecule type" value="Genomic_DNA"/>
</dbReference>
<dbReference type="EMBL" id="BC005198">
    <property type="protein sequence ID" value="AAH05198.1"/>
    <property type="molecule type" value="mRNA"/>
</dbReference>
<dbReference type="EMBL" id="BC010359">
    <property type="protein sequence ID" value="AAH10359.1"/>
    <property type="molecule type" value="mRNA"/>
</dbReference>
<dbReference type="CCDS" id="CCDS45116.1">
    <molecule id="Q9P055-4"/>
</dbReference>
<dbReference type="CCDS" id="CCDS45117.1">
    <molecule id="Q9P055-3"/>
</dbReference>
<dbReference type="CCDS" id="CCDS61463.1">
    <molecule id="Q9P055-5"/>
</dbReference>
<dbReference type="RefSeq" id="NP_001092095.1">
    <molecule id="Q9P055-3"/>
    <property type="nucleotide sequence ID" value="NM_001098625.3"/>
</dbReference>
<dbReference type="RefSeq" id="NP_001271130.1">
    <property type="nucleotide sequence ID" value="NM_001284201.1"/>
</dbReference>
<dbReference type="RefSeq" id="NP_001271131.1">
    <molecule id="Q9P055-5"/>
    <property type="nucleotide sequence ID" value="NM_001284202.2"/>
</dbReference>
<dbReference type="RefSeq" id="NP_001271132.1">
    <molecule id="Q9P055-2"/>
    <property type="nucleotide sequence ID" value="NM_001284203.2"/>
</dbReference>
<dbReference type="RefSeq" id="NP_001271133.1">
    <property type="nucleotide sequence ID" value="NM_001284204.1"/>
</dbReference>
<dbReference type="RefSeq" id="NP_057559.2">
    <molecule id="Q9P055-4"/>
    <property type="nucleotide sequence ID" value="NM_016475.4"/>
</dbReference>
<dbReference type="RefSeq" id="XP_047287423.1">
    <molecule id="Q9P055-2"/>
    <property type="nucleotide sequence ID" value="XM_047431467.1"/>
</dbReference>
<dbReference type="RefSeq" id="XP_054232180.1">
    <molecule id="Q9P055-2"/>
    <property type="nucleotide sequence ID" value="XM_054376205.1"/>
</dbReference>
<dbReference type="BioGRID" id="119590">
    <property type="interactions" value="13"/>
</dbReference>
<dbReference type="FunCoup" id="Q9P055">
    <property type="interactions" value="2297"/>
</dbReference>
<dbReference type="IntAct" id="Q9P055">
    <property type="interactions" value="4"/>
</dbReference>
<dbReference type="MINT" id="Q9P055"/>
<dbReference type="STRING" id="9606.ENSP00000450749"/>
<dbReference type="GlyGen" id="Q9P055">
    <property type="glycosylation" value="2 sites"/>
</dbReference>
<dbReference type="iPTMnet" id="Q9P055"/>
<dbReference type="PhosphoSitePlus" id="Q9P055"/>
<dbReference type="BioMuta" id="JKAMP"/>
<dbReference type="DMDM" id="38257782"/>
<dbReference type="jPOST" id="Q9P055"/>
<dbReference type="MassIVE" id="Q9P055"/>
<dbReference type="PaxDb" id="9606-ENSP00000450749"/>
<dbReference type="PeptideAtlas" id="Q9P055"/>
<dbReference type="ProteomicsDB" id="83542">
    <molecule id="Q9P055-2"/>
</dbReference>
<dbReference type="ProteomicsDB" id="83543">
    <molecule id="Q9P055-3"/>
</dbReference>
<dbReference type="ProteomicsDB" id="83544">
    <molecule id="Q9P055-4"/>
</dbReference>
<dbReference type="ProteomicsDB" id="83545">
    <molecule id="Q9P055-5"/>
</dbReference>
<dbReference type="Antibodypedia" id="51808">
    <property type="antibodies" value="55 antibodies from 8 providers"/>
</dbReference>
<dbReference type="DNASU" id="51528"/>
<dbReference type="Ensembl" id="ENST00000356057.9">
    <molecule id="Q9P055-5"/>
    <property type="protein sequence ID" value="ENSP00000348351.5"/>
    <property type="gene ID" value="ENSG00000050130.18"/>
</dbReference>
<dbReference type="Ensembl" id="ENST00000425728.6">
    <molecule id="Q9P055-3"/>
    <property type="protein sequence ID" value="ENSP00000389699.2"/>
    <property type="gene ID" value="ENSG00000050130.18"/>
</dbReference>
<dbReference type="Ensembl" id="ENST00000616435.5">
    <molecule id="Q9P055-4"/>
    <property type="protein sequence ID" value="ENSP00000479775.2"/>
    <property type="gene ID" value="ENSG00000050130.18"/>
</dbReference>
<dbReference type="GeneID" id="51528"/>
<dbReference type="KEGG" id="hsa:51528"/>
<dbReference type="MANE-Select" id="ENST00000616435.5">
    <property type="protein sequence ID" value="ENSP00000479775.2"/>
    <property type="RefSeq nucleotide sequence ID" value="NM_016475.5"/>
    <property type="RefSeq protein sequence ID" value="NP_057559.2"/>
</dbReference>
<dbReference type="UCSC" id="uc001xef.6">
    <molecule id="Q9P055-4"/>
    <property type="organism name" value="human"/>
</dbReference>
<dbReference type="AGR" id="HGNC:20184"/>
<dbReference type="CTD" id="51528"/>
<dbReference type="DisGeNET" id="51528"/>
<dbReference type="GeneCards" id="JKAMP"/>
<dbReference type="HGNC" id="HGNC:20184">
    <property type="gene designation" value="JKAMP"/>
</dbReference>
<dbReference type="HPA" id="ENSG00000050130">
    <property type="expression patterns" value="Low tissue specificity"/>
</dbReference>
<dbReference type="MIM" id="611176">
    <property type="type" value="gene"/>
</dbReference>
<dbReference type="neXtProt" id="NX_Q9P055"/>
<dbReference type="OpenTargets" id="ENSG00000050130"/>
<dbReference type="PharmGKB" id="PA165479069"/>
<dbReference type="VEuPathDB" id="HostDB:ENSG00000050130"/>
<dbReference type="eggNOG" id="KOG3744">
    <property type="taxonomic scope" value="Eukaryota"/>
</dbReference>
<dbReference type="GeneTree" id="ENSGT00390000018097"/>
<dbReference type="HOGENOM" id="CLU_062918_1_0_1"/>
<dbReference type="InParanoid" id="Q9P055"/>
<dbReference type="OMA" id="CPGIYCG"/>
<dbReference type="OrthoDB" id="5920264at2759"/>
<dbReference type="PAN-GO" id="Q9P055">
    <property type="GO annotations" value="2 GO annotations based on evolutionary models"/>
</dbReference>
<dbReference type="PhylomeDB" id="Q9P055"/>
<dbReference type="TreeFam" id="TF314201"/>
<dbReference type="PathwayCommons" id="Q9P055"/>
<dbReference type="SignaLink" id="Q9P055"/>
<dbReference type="SIGNOR" id="Q9P055"/>
<dbReference type="BioGRID-ORCS" id="51528">
    <property type="hits" value="20 hits in 1153 CRISPR screens"/>
</dbReference>
<dbReference type="ChiTaRS" id="JKAMP">
    <property type="organism name" value="human"/>
</dbReference>
<dbReference type="GeneWiki" id="JKAMP"/>
<dbReference type="GenomeRNAi" id="51528"/>
<dbReference type="Pharos" id="Q9P055">
    <property type="development level" value="Tbio"/>
</dbReference>
<dbReference type="PRO" id="PR:Q9P055"/>
<dbReference type="Proteomes" id="UP000005640">
    <property type="component" value="Chromosome 14"/>
</dbReference>
<dbReference type="RNAct" id="Q9P055">
    <property type="molecule type" value="protein"/>
</dbReference>
<dbReference type="Bgee" id="ENSG00000050130">
    <property type="expression patterns" value="Expressed in islet of Langerhans and 186 other cell types or tissues"/>
</dbReference>
<dbReference type="ExpressionAtlas" id="Q9P055">
    <property type="expression patterns" value="baseline and differential"/>
</dbReference>
<dbReference type="GO" id="GO:0005789">
    <property type="term" value="C:endoplasmic reticulum membrane"/>
    <property type="evidence" value="ECO:0007669"/>
    <property type="project" value="UniProtKB-SubCell"/>
</dbReference>
<dbReference type="GO" id="GO:0031625">
    <property type="term" value="F:ubiquitin protein ligase binding"/>
    <property type="evidence" value="ECO:0000353"/>
    <property type="project" value="UniProtKB"/>
</dbReference>
<dbReference type="GO" id="GO:0036503">
    <property type="term" value="P:ERAD pathway"/>
    <property type="evidence" value="ECO:0000314"/>
    <property type="project" value="UniProtKB"/>
</dbReference>
<dbReference type="GO" id="GO:0006986">
    <property type="term" value="P:response to unfolded protein"/>
    <property type="evidence" value="ECO:0007669"/>
    <property type="project" value="UniProtKB-KW"/>
</dbReference>
<dbReference type="InterPro" id="IPR008485">
    <property type="entry name" value="JAMP"/>
</dbReference>
<dbReference type="PANTHER" id="PTHR12740">
    <property type="entry name" value="JNK1/MAPK8-ASSOCIATED MEMBRANE PROTEIN"/>
    <property type="match status" value="1"/>
</dbReference>
<dbReference type="PANTHER" id="PTHR12740:SF4">
    <property type="entry name" value="JNK1_MAPK8-ASSOCIATED MEMBRANE PROTEIN"/>
    <property type="match status" value="1"/>
</dbReference>
<dbReference type="Pfam" id="PF05571">
    <property type="entry name" value="JAMP"/>
    <property type="match status" value="1"/>
</dbReference>
<evidence type="ECO:0000250" key="1">
    <source>
        <dbReference type="UniProtKB" id="Q8BI36"/>
    </source>
</evidence>
<evidence type="ECO:0000255" key="2"/>
<evidence type="ECO:0000269" key="3">
    <source>
    </source>
</evidence>
<evidence type="ECO:0000269" key="4">
    <source>
    </source>
</evidence>
<evidence type="ECO:0000305" key="5"/>
<evidence type="ECO:0000305" key="6">
    <source>
    </source>
</evidence>
<keyword id="KW-0025">Alternative splicing</keyword>
<keyword id="KW-0256">Endoplasmic reticulum</keyword>
<keyword id="KW-0325">Glycoprotein</keyword>
<keyword id="KW-0472">Membrane</keyword>
<keyword id="KW-1267">Proteomics identification</keyword>
<keyword id="KW-1185">Reference proteome</keyword>
<keyword id="KW-0812">Transmembrane</keyword>
<keyword id="KW-1133">Transmembrane helix</keyword>
<keyword id="KW-0832">Ubl conjugation</keyword>
<keyword id="KW-0834">Unfolded protein response</keyword>
<feature type="chain" id="PRO_0000089903" description="JNK1/MAPK8-associated membrane protein">
    <location>
        <begin position="1"/>
        <end position="311"/>
    </location>
</feature>
<feature type="topological domain" description="Lumenal" evidence="2">
    <location>
        <begin position="1"/>
        <end position="57"/>
    </location>
</feature>
<feature type="transmembrane region" description="Helical" evidence="2">
    <location>
        <begin position="58"/>
        <end position="78"/>
    </location>
</feature>
<feature type="topological domain" description="Cytoplasmic" evidence="2">
    <location>
        <begin position="79"/>
        <end position="87"/>
    </location>
</feature>
<feature type="transmembrane region" description="Helical" evidence="2">
    <location>
        <begin position="88"/>
        <end position="108"/>
    </location>
</feature>
<feature type="topological domain" description="Lumenal" evidence="2">
    <location>
        <begin position="109"/>
        <end position="149"/>
    </location>
</feature>
<feature type="transmembrane region" description="Helical" evidence="2">
    <location>
        <begin position="150"/>
        <end position="170"/>
    </location>
</feature>
<feature type="topological domain" description="Cytoplasmic" evidence="2">
    <location>
        <begin position="171"/>
        <end position="188"/>
    </location>
</feature>
<feature type="transmembrane region" description="Helical" evidence="2">
    <location>
        <begin position="189"/>
        <end position="209"/>
    </location>
</feature>
<feature type="topological domain" description="Lumenal" evidence="2">
    <location>
        <position position="210"/>
    </location>
</feature>
<feature type="transmembrane region" description="Helical" evidence="2">
    <location>
        <begin position="211"/>
        <end position="231"/>
    </location>
</feature>
<feature type="topological domain" description="Cytoplasmic" evidence="2">
    <location>
        <begin position="232"/>
        <end position="250"/>
    </location>
</feature>
<feature type="transmembrane region" description="Helical" evidence="2">
    <location>
        <begin position="251"/>
        <end position="271"/>
    </location>
</feature>
<feature type="topological domain" description="Lumenal" evidence="2">
    <location>
        <begin position="272"/>
        <end position="277"/>
    </location>
</feature>
<feature type="transmembrane region" description="Helical" evidence="2">
    <location>
        <begin position="278"/>
        <end position="298"/>
    </location>
</feature>
<feature type="topological domain" description="Cytoplasmic" evidence="2">
    <location>
        <begin position="299"/>
        <end position="311"/>
    </location>
</feature>
<feature type="glycosylation site" description="N-linked (GlcNAc...) asparagine" evidence="2">
    <location>
        <position position="22"/>
    </location>
</feature>
<feature type="splice variant" id="VSP_060708" description="In isoform 2." evidence="6">
    <location>
        <begin position="1"/>
        <end position="63"/>
    </location>
</feature>
<feature type="splice variant" id="VSP_060709" description="In isoform 4." evidence="5">
    <original>MAVDIQPA</original>
    <variation>MKGEIQQSLGAWVLLT</variation>
    <location>
        <begin position="1"/>
        <end position="8"/>
    </location>
</feature>
<feature type="splice variant" id="VSP_060710" description="In isoform 3." evidence="5">
    <original>MAVDIQP</original>
    <variation>M</variation>
    <location>
        <begin position="1"/>
        <end position="7"/>
    </location>
</feature>
<feature type="sequence conflict" description="In Ref. 4; BAB13874." evidence="5" ref="4">
    <original>V</original>
    <variation>A</variation>
    <location>
        <position position="70"/>
    </location>
</feature>
<feature type="sequence conflict" description="In Ref. 2; AAF36133." evidence="5" ref="2">
    <original>S</original>
    <variation>P</variation>
    <location>
        <position position="126"/>
    </location>
</feature>
<feature type="sequence conflict" description="In Ref. 2; AAF36133." evidence="5" ref="2">
    <original>N</original>
    <variation>S</variation>
    <location>
        <position position="134"/>
    </location>
</feature>
<protein>
    <recommendedName>
        <fullName>JNK1/MAPK8-associated membrane protein</fullName>
        <shortName>JKAMP</shortName>
    </recommendedName>
    <alternativeName>
        <fullName>JNK1-associated membrane protein</fullName>
        <shortName>JAMP</shortName>
    </alternativeName>
    <alternativeName>
        <fullName>Medulloblastoma antigen MU-MB-50.4</fullName>
    </alternativeName>
</protein>
<gene>
    <name type="primary">JKAMP</name>
    <name type="synonym">C14orf100</name>
    <name type="synonym">JAMP</name>
    <name type="ORF">CDA06</name>
    <name type="ORF">HSPC213</name>
    <name type="ORF">HSPC327</name>
</gene>
<reference key="1">
    <citation type="journal article" date="2003" name="Int. J. Cancer">
        <title>Novel tumor antigens identified by autologous antibody screening of childhood medulloblastoma cDNA libraries.</title>
        <authorList>
            <person name="Behrends U."/>
            <person name="Schneider I."/>
            <person name="Roessler S."/>
            <person name="Frauenknecht H."/>
            <person name="Golbeck A."/>
            <person name="Lechner B."/>
            <person name="Eigenstetter G."/>
            <person name="Zobywalski C."/>
            <person name="Mueller-Weihrich S."/>
            <person name="Graubner U."/>
            <person name="Schmid I."/>
            <person name="Sackerer D."/>
            <person name="Spaeth M."/>
            <person name="Goetz C."/>
            <person name="Prantl F."/>
            <person name="Asmuss H.-P."/>
            <person name="Bise K."/>
            <person name="Mautner J."/>
        </authorList>
    </citation>
    <scope>NUCLEOTIDE SEQUENCE [MRNA] (ISOFORM 2)</scope>
    <source>
        <tissue>Medulloblastoma</tissue>
    </source>
</reference>
<reference key="2">
    <citation type="journal article" date="2000" name="Genome Res.">
        <title>Cloning and functional analysis of cDNAs with open reading frames for 300 previously undefined genes expressed in CD34+ hematopoietic stem/progenitor cells.</title>
        <authorList>
            <person name="Zhang Q.-H."/>
            <person name="Ye M."/>
            <person name="Wu X.-Y."/>
            <person name="Ren S.-X."/>
            <person name="Zhao M."/>
            <person name="Zhao C.-J."/>
            <person name="Fu G."/>
            <person name="Shen Y."/>
            <person name="Fan H.-Y."/>
            <person name="Lu G."/>
            <person name="Zhong M."/>
            <person name="Xu X.-R."/>
            <person name="Han Z.-G."/>
            <person name="Zhang J.-W."/>
            <person name="Tao J."/>
            <person name="Huang Q.-H."/>
            <person name="Zhou J."/>
            <person name="Hu G.-X."/>
            <person name="Gu J."/>
            <person name="Chen S.-J."/>
            <person name="Chen Z."/>
        </authorList>
    </citation>
    <scope>NUCLEOTIDE SEQUENCE [LARGE SCALE MRNA] (ISOFORM 3)</scope>
    <source>
        <tissue>Umbilical cord blood</tissue>
    </source>
</reference>
<reference key="3">
    <citation type="journal article" date="2001" name="Genome Res.">
        <title>Towards a catalog of human genes and proteins: sequencing and analysis of 500 novel complete protein coding human cDNAs.</title>
        <authorList>
            <person name="Wiemann S."/>
            <person name="Weil B."/>
            <person name="Wellenreuther R."/>
            <person name="Gassenhuber J."/>
            <person name="Glassl S."/>
            <person name="Ansorge W."/>
            <person name="Boecher M."/>
            <person name="Bloecker H."/>
            <person name="Bauersachs S."/>
            <person name="Blum H."/>
            <person name="Lauber J."/>
            <person name="Duesterhoeft A."/>
            <person name="Beyer A."/>
            <person name="Koehrer K."/>
            <person name="Strack N."/>
            <person name="Mewes H.-W."/>
            <person name="Ottenwaelder B."/>
            <person name="Obermaier B."/>
            <person name="Tampe J."/>
            <person name="Heubner D."/>
            <person name="Wambutt R."/>
            <person name="Korn B."/>
            <person name="Klein M."/>
            <person name="Poustka A."/>
        </authorList>
    </citation>
    <scope>NUCLEOTIDE SEQUENCE [LARGE SCALE MRNA] (ISOFORM 1)</scope>
    <source>
        <tissue>Fetal brain</tissue>
    </source>
</reference>
<reference key="4">
    <citation type="journal article" date="2004" name="Nat. Genet.">
        <title>Complete sequencing and characterization of 21,243 full-length human cDNAs.</title>
        <authorList>
            <person name="Ota T."/>
            <person name="Suzuki Y."/>
            <person name="Nishikawa T."/>
            <person name="Otsuki T."/>
            <person name="Sugiyama T."/>
            <person name="Irie R."/>
            <person name="Wakamatsu A."/>
            <person name="Hayashi K."/>
            <person name="Sato H."/>
            <person name="Nagai K."/>
            <person name="Kimura K."/>
            <person name="Makita H."/>
            <person name="Sekine M."/>
            <person name="Obayashi M."/>
            <person name="Nishi T."/>
            <person name="Shibahara T."/>
            <person name="Tanaka T."/>
            <person name="Ishii S."/>
            <person name="Yamamoto J."/>
            <person name="Saito K."/>
            <person name="Kawai Y."/>
            <person name="Isono Y."/>
            <person name="Nakamura Y."/>
            <person name="Nagahari K."/>
            <person name="Murakami K."/>
            <person name="Yasuda T."/>
            <person name="Iwayanagi T."/>
            <person name="Wagatsuma M."/>
            <person name="Shiratori A."/>
            <person name="Sudo H."/>
            <person name="Hosoiri T."/>
            <person name="Kaku Y."/>
            <person name="Kodaira H."/>
            <person name="Kondo H."/>
            <person name="Sugawara M."/>
            <person name="Takahashi M."/>
            <person name="Kanda K."/>
            <person name="Yokoi T."/>
            <person name="Furuya T."/>
            <person name="Kikkawa E."/>
            <person name="Omura Y."/>
            <person name="Abe K."/>
            <person name="Kamihara K."/>
            <person name="Katsuta N."/>
            <person name="Sato K."/>
            <person name="Tanikawa M."/>
            <person name="Yamazaki M."/>
            <person name="Ninomiya K."/>
            <person name="Ishibashi T."/>
            <person name="Yamashita H."/>
            <person name="Murakawa K."/>
            <person name="Fujimori K."/>
            <person name="Tanai H."/>
            <person name="Kimata M."/>
            <person name="Watanabe M."/>
            <person name="Hiraoka S."/>
            <person name="Chiba Y."/>
            <person name="Ishida S."/>
            <person name="Ono Y."/>
            <person name="Takiguchi S."/>
            <person name="Watanabe S."/>
            <person name="Yosida M."/>
            <person name="Hotuta T."/>
            <person name="Kusano J."/>
            <person name="Kanehori K."/>
            <person name="Takahashi-Fujii A."/>
            <person name="Hara H."/>
            <person name="Tanase T.-O."/>
            <person name="Nomura Y."/>
            <person name="Togiya S."/>
            <person name="Komai F."/>
            <person name="Hara R."/>
            <person name="Takeuchi K."/>
            <person name="Arita M."/>
            <person name="Imose N."/>
            <person name="Musashino K."/>
            <person name="Yuuki H."/>
            <person name="Oshima A."/>
            <person name="Sasaki N."/>
            <person name="Aotsuka S."/>
            <person name="Yoshikawa Y."/>
            <person name="Matsunawa H."/>
            <person name="Ichihara T."/>
            <person name="Shiohata N."/>
            <person name="Sano S."/>
            <person name="Moriya S."/>
            <person name="Momiyama H."/>
            <person name="Satoh N."/>
            <person name="Takami S."/>
            <person name="Terashima Y."/>
            <person name="Suzuki O."/>
            <person name="Nakagawa S."/>
            <person name="Senoh A."/>
            <person name="Mizoguchi H."/>
            <person name="Goto Y."/>
            <person name="Shimizu F."/>
            <person name="Wakebe H."/>
            <person name="Hishigaki H."/>
            <person name="Watanabe T."/>
            <person name="Sugiyama A."/>
            <person name="Takemoto M."/>
            <person name="Kawakami B."/>
            <person name="Yamazaki M."/>
            <person name="Watanabe K."/>
            <person name="Kumagai A."/>
            <person name="Itakura S."/>
            <person name="Fukuzumi Y."/>
            <person name="Fujimori Y."/>
            <person name="Komiyama M."/>
            <person name="Tashiro H."/>
            <person name="Tanigami A."/>
            <person name="Fujiwara T."/>
            <person name="Ono T."/>
            <person name="Yamada K."/>
            <person name="Fujii Y."/>
            <person name="Ozaki K."/>
            <person name="Hirao M."/>
            <person name="Ohmori Y."/>
            <person name="Kawabata A."/>
            <person name="Hikiji T."/>
            <person name="Kobatake N."/>
            <person name="Inagaki H."/>
            <person name="Ikema Y."/>
            <person name="Okamoto S."/>
            <person name="Okitani R."/>
            <person name="Kawakami T."/>
            <person name="Noguchi S."/>
            <person name="Itoh T."/>
            <person name="Shigeta K."/>
            <person name="Senba T."/>
            <person name="Matsumura K."/>
            <person name="Nakajima Y."/>
            <person name="Mizuno T."/>
            <person name="Morinaga M."/>
            <person name="Sasaki M."/>
            <person name="Togashi T."/>
            <person name="Oyama M."/>
            <person name="Hata H."/>
            <person name="Watanabe M."/>
            <person name="Komatsu T."/>
            <person name="Mizushima-Sugano J."/>
            <person name="Satoh T."/>
            <person name="Shirai Y."/>
            <person name="Takahashi Y."/>
            <person name="Nakagawa K."/>
            <person name="Okumura K."/>
            <person name="Nagase T."/>
            <person name="Nomura N."/>
            <person name="Kikuchi H."/>
            <person name="Masuho Y."/>
            <person name="Yamashita R."/>
            <person name="Nakai K."/>
            <person name="Yada T."/>
            <person name="Nakamura Y."/>
            <person name="Ohara O."/>
            <person name="Isogai T."/>
            <person name="Sugano S."/>
        </authorList>
    </citation>
    <scope>NUCLEOTIDE SEQUENCE [LARGE SCALE MRNA] (ISOFORMS 1; 2 AND 3)</scope>
    <source>
        <tissue>Embryo</tissue>
        <tissue>Teratocarcinoma</tissue>
    </source>
</reference>
<reference key="5">
    <citation type="submission" date="1999-12" db="EMBL/GenBank/DDBJ databases">
        <title>A novel gene expressed in human pheochromocytoma.</title>
        <authorList>
            <person name="Li Y."/>
            <person name="Huang Q."/>
            <person name="Peng Y."/>
            <person name="Song H."/>
            <person name="Yu Y."/>
            <person name="Xu S."/>
            <person name="Ren S."/>
            <person name="Chen Z."/>
            <person name="Han Z."/>
        </authorList>
    </citation>
    <scope>NUCLEOTIDE SEQUENCE [LARGE SCALE MRNA] (ISOFORM 3)</scope>
    <source>
        <tissue>Pheochromocytoma</tissue>
    </source>
</reference>
<reference key="6">
    <citation type="submission" date="2003-01" db="EMBL/GenBank/DDBJ databases">
        <title>Full-length cDNA libraries and normalization.</title>
        <authorList>
            <person name="Li W.B."/>
            <person name="Gruber C."/>
            <person name="Jessee J."/>
            <person name="Polayes D."/>
        </authorList>
    </citation>
    <scope>NUCLEOTIDE SEQUENCE [LARGE SCALE MRNA] (ISOFORM 4)</scope>
    <source>
        <tissue>Cervix carcinoma</tissue>
    </source>
</reference>
<reference key="7">
    <citation type="submission" date="2004-06" db="EMBL/GenBank/DDBJ databases">
        <title>Cloning of human full open reading frames in Gateway(TM) system entry vector (pDONR201).</title>
        <authorList>
            <person name="Ebert L."/>
            <person name="Schick M."/>
            <person name="Neubert P."/>
            <person name="Schatten R."/>
            <person name="Henze S."/>
            <person name="Korn B."/>
        </authorList>
    </citation>
    <scope>NUCLEOTIDE SEQUENCE [LARGE SCALE MRNA] (ISOFORMS 1 AND 3)</scope>
</reference>
<reference key="8">
    <citation type="submission" date="2005-07" db="EMBL/GenBank/DDBJ databases">
        <authorList>
            <person name="Mural R.J."/>
            <person name="Istrail S."/>
            <person name="Sutton G.G."/>
            <person name="Florea L."/>
            <person name="Halpern A.L."/>
            <person name="Mobarry C.M."/>
            <person name="Lippert R."/>
            <person name="Walenz B."/>
            <person name="Shatkay H."/>
            <person name="Dew I."/>
            <person name="Miller J.R."/>
            <person name="Flanigan M.J."/>
            <person name="Edwards N.J."/>
            <person name="Bolanos R."/>
            <person name="Fasulo D."/>
            <person name="Halldorsson B.V."/>
            <person name="Hannenhalli S."/>
            <person name="Turner R."/>
            <person name="Yooseph S."/>
            <person name="Lu F."/>
            <person name="Nusskern D.R."/>
            <person name="Shue B.C."/>
            <person name="Zheng X.H."/>
            <person name="Zhong F."/>
            <person name="Delcher A.L."/>
            <person name="Huson D.H."/>
            <person name="Kravitz S.A."/>
            <person name="Mouchard L."/>
            <person name="Reinert K."/>
            <person name="Remington K.A."/>
            <person name="Clark A.G."/>
            <person name="Waterman M.S."/>
            <person name="Eichler E.E."/>
            <person name="Adams M.D."/>
            <person name="Hunkapiller M.W."/>
            <person name="Myers E.W."/>
            <person name="Venter J.C."/>
        </authorList>
    </citation>
    <scope>NUCLEOTIDE SEQUENCE [LARGE SCALE GENOMIC DNA]</scope>
</reference>
<reference key="9">
    <citation type="journal article" date="2004" name="Genome Res.">
        <title>The status, quality, and expansion of the NIH full-length cDNA project: the Mammalian Gene Collection (MGC).</title>
        <authorList>
            <consortium name="The MGC Project Team"/>
        </authorList>
    </citation>
    <scope>NUCLEOTIDE SEQUENCE [LARGE SCALE MRNA] (ISOFORMS 1 AND 3)</scope>
    <source>
        <tissue>Bone marrow</tissue>
    </source>
</reference>
<reference evidence="5" key="10">
    <citation type="journal article" date="2008" name="Mol. Biol. Cell">
        <title>JAMP optimizes ERAD to protect cells from unfolded proteins.</title>
        <authorList>
            <person name="Tcherpakov M."/>
            <person name="Broday L."/>
            <person name="Delaunay A."/>
            <person name="Kadoya T."/>
            <person name="Khurana A."/>
            <person name="Erdjument-Bromage H."/>
            <person name="Tempst P."/>
            <person name="Qiu X.-B."/>
            <person name="DeMartino G.N."/>
            <person name="Ronai Z."/>
        </authorList>
    </citation>
    <scope>FUNCTION</scope>
    <scope>SUBCELLULAR LOCATION</scope>
    <scope>INDUCTION</scope>
    <scope>INTERACTION WITH DERL1</scope>
</reference>
<name>JKAMP_HUMAN</name>
<organism>
    <name type="scientific">Homo sapiens</name>
    <name type="common">Human</name>
    <dbReference type="NCBI Taxonomy" id="9606"/>
    <lineage>
        <taxon>Eukaryota</taxon>
        <taxon>Metazoa</taxon>
        <taxon>Chordata</taxon>
        <taxon>Craniata</taxon>
        <taxon>Vertebrata</taxon>
        <taxon>Euteleostomi</taxon>
        <taxon>Mammalia</taxon>
        <taxon>Eutheria</taxon>
        <taxon>Euarchontoglires</taxon>
        <taxon>Primates</taxon>
        <taxon>Haplorrhini</taxon>
        <taxon>Catarrhini</taxon>
        <taxon>Hominidae</taxon>
        <taxon>Homo</taxon>
    </lineage>
</organism>
<proteinExistence type="evidence at protein level"/>
<comment type="function">
    <text evidence="1 4">Regulates the duration of MAPK8 activity in response to various stress stimuli (By similarity). Facilitates degradation of misfolded endoplasmic reticulum (ER) proteins through the recruitment of components of the proteasome and endoplasmic reticulum-associated degradation (ERAD) system (PubMed:18784250).</text>
</comment>
<comment type="subunit">
    <text evidence="1 4">Interacts with RNF5 and MAPK8, but not with MAPK9. Binding to MAPK8 occurs before and after exposure to stress, such as UV irradiation. After exposure to stress, interacts with phosphorylated MAPK8. Competes with DUSP10 for MAPK8 binding. Associates with multiple components of the proteasome and with ERAD regulatory proteins including AMFR/GP78, CANX, PSMC1, PSMC2, PSMC3/TBP1, PSMC5, PSMC6, PSMD8, SEC61-ALPHA and UFD1 (By similarity). Interacts with DERL1 (in the presence of misfolded protein CFTR(F508del)) (PubMed:18784250).</text>
</comment>
<comment type="interaction">
    <interactant intactId="EBI-13310605">
        <id>Q9P055-4</id>
    </interactant>
    <interactant intactId="EBI-751210">
        <id>Q96EC8</id>
        <label>YIPF6</label>
    </interactant>
    <organismsDiffer>false</organismsDiffer>
    <experiments>3</experiments>
</comment>
<comment type="subcellular location">
    <subcellularLocation>
        <location evidence="4">Endoplasmic reticulum membrane</location>
        <topology evidence="2">Multi-pass membrane protein</topology>
    </subcellularLocation>
</comment>
<comment type="alternative products">
    <event type="alternative splicing"/>
    <isoform>
        <id>Q9P055-4</id>
        <name>1</name>
        <sequence type="displayed"/>
    </isoform>
    <isoform>
        <id>Q9P055-2</id>
        <name>2</name>
        <sequence type="described" ref="VSP_060708"/>
    </isoform>
    <isoform>
        <id>Q9P055-3</id>
        <name>3</name>
        <sequence type="described" ref="VSP_060710"/>
    </isoform>
    <isoform>
        <id>Q9P055-5</id>
        <name>4</name>
        <sequence type="described" ref="VSP_060709"/>
    </isoform>
</comment>
<comment type="induction">
    <text evidence="4">Basal expression under nonstress conditions; expression increases transiently after endoplasmic reticulum (ER) stress.</text>
</comment>
<comment type="PTM">
    <text evidence="1">Ubiquitinated by RNF5 via 'Lys-63'-linked ubiquitin linkage in a UBE2N-dependent manner. Ubiquitination decreases association with components of the proteasome and ERAD.</text>
</comment>
<comment type="miscellaneous">
    <text evidence="3">Elevated expression in medulloblastomas (PubMed:12800201). Patients with cancer had 2 to 12-fold higher frequencies of antibodies against this antigen (PubMed:12800201).</text>
</comment>
<comment type="sequence caution" evidence="5">
    <conflict type="frameshift">
        <sequence resource="EMBL-CDS" id="AAF29005"/>
    </conflict>
</comment>
<comment type="sequence caution" evidence="5">
    <conflict type="frameshift">
        <sequence resource="EMBL-CDS" id="AAF36133"/>
    </conflict>
</comment>